<organism>
    <name type="scientific">Rattus norvegicus</name>
    <name type="common">Rat</name>
    <dbReference type="NCBI Taxonomy" id="10116"/>
    <lineage>
        <taxon>Eukaryota</taxon>
        <taxon>Metazoa</taxon>
        <taxon>Chordata</taxon>
        <taxon>Craniata</taxon>
        <taxon>Vertebrata</taxon>
        <taxon>Euteleostomi</taxon>
        <taxon>Mammalia</taxon>
        <taxon>Eutheria</taxon>
        <taxon>Euarchontoglires</taxon>
        <taxon>Glires</taxon>
        <taxon>Rodentia</taxon>
        <taxon>Myomorpha</taxon>
        <taxon>Muroidea</taxon>
        <taxon>Muridae</taxon>
        <taxon>Murinae</taxon>
        <taxon>Rattus</taxon>
    </lineage>
</organism>
<protein>
    <recommendedName>
        <fullName>Acetylcholinesterase</fullName>
        <shortName>AChE</shortName>
        <ecNumber evidence="4">3.1.1.7</ecNumber>
    </recommendedName>
</protein>
<keyword id="KW-0025">Alternative splicing</keyword>
<keyword id="KW-1003">Cell membrane</keyword>
<keyword id="KW-1015">Disulfide bond</keyword>
<keyword id="KW-0325">Glycoprotein</keyword>
<keyword id="KW-0336">GPI-anchor</keyword>
<keyword id="KW-0378">Hydrolase</keyword>
<keyword id="KW-0449">Lipoprotein</keyword>
<keyword id="KW-0472">Membrane</keyword>
<keyword id="KW-0531">Neurotransmitter degradation</keyword>
<keyword id="KW-1185">Reference proteome</keyword>
<keyword id="KW-0964">Secreted</keyword>
<keyword id="KW-0719">Serine esterase</keyword>
<keyword id="KW-0732">Signal</keyword>
<keyword id="KW-0770">Synapse</keyword>
<proteinExistence type="evidence at protein level"/>
<evidence type="ECO:0000250" key="1"/>
<evidence type="ECO:0000255" key="2"/>
<evidence type="ECO:0000255" key="3">
    <source>
        <dbReference type="PROSITE-ProRule" id="PRU10039"/>
    </source>
</evidence>
<evidence type="ECO:0000269" key="4">
    <source>
    </source>
</evidence>
<evidence type="ECO:0000303" key="5">
    <source>
    </source>
</evidence>
<evidence type="ECO:0000303" key="6">
    <source>
    </source>
</evidence>
<evidence type="ECO:0000305" key="7"/>
<evidence type="ECO:0000305" key="8">
    <source>
    </source>
</evidence>
<feature type="signal peptide" evidence="2">
    <location>
        <begin position="1"/>
        <end position="31"/>
    </location>
</feature>
<feature type="chain" id="PRO_0000008590" description="Acetylcholinesterase">
    <location>
        <begin position="32"/>
        <end position="614"/>
    </location>
</feature>
<feature type="active site" description="Acyl-ester intermediate" evidence="3">
    <location>
        <position position="234"/>
    </location>
</feature>
<feature type="active site" description="Charge relay system" evidence="1">
    <location>
        <position position="365"/>
    </location>
</feature>
<feature type="active site" description="Charge relay system" evidence="1">
    <location>
        <position position="478"/>
    </location>
</feature>
<feature type="glycosylation site" description="N-linked (GlcNAc...) asparagine" evidence="2">
    <location>
        <position position="296"/>
    </location>
</feature>
<feature type="glycosylation site" description="N-linked (GlcNAc...) asparagine" evidence="2">
    <location>
        <position position="381"/>
    </location>
</feature>
<feature type="glycosylation site" description="N-linked (GlcNAc...) asparagine" evidence="2">
    <location>
        <position position="495"/>
    </location>
</feature>
<feature type="disulfide bond" evidence="1">
    <location>
        <begin position="100"/>
        <end position="127"/>
    </location>
</feature>
<feature type="disulfide bond" evidence="1">
    <location>
        <begin position="288"/>
        <end position="303"/>
    </location>
</feature>
<feature type="disulfide bond" evidence="1">
    <location>
        <begin position="440"/>
        <end position="560"/>
    </location>
</feature>
<feature type="disulfide bond" description="Interchain" evidence="1">
    <location>
        <position position="611"/>
    </location>
</feature>
<feature type="splice variant" id="VSP_001458" description="In isoform H." evidence="6">
    <original>DTLDEAERQWKAEFHRWSSYMVHWKNQFDHYSKQERCSDL</original>
    <variation>ATEVPCTCPSPAHGEAAPRPGPALSLSLLFFLFLLHSGLRWL</variation>
    <location>
        <begin position="575"/>
        <end position="614"/>
    </location>
</feature>
<feature type="splice variant" id="VSP_001459" description="In isoform R." evidence="6">
    <original>DTLDEAERQWKAEFHRWSSYMVHWKNQFDHYSKQERCSDL</original>
    <variation>GRRGVGKQGMHKAARVGRTGERKGGKHRM</variation>
    <location>
        <begin position="575"/>
        <end position="614"/>
    </location>
</feature>
<accession>P37136</accession>
<sequence length="614" mass="68196">MRPPWYPLHTPSLASPLLFLLLSLLGGGARAEGREDPQLLVRVRGGQLRGIRLKAPGGPVSAFLGIPFAEPPVGSRRFMPPEPKRPWSGILDATTFQNVCYQYVDTLYPGFEGTEMWNPNRELSEDCLYLNVWTPYPRPTSPTPVLIWIYGGGFYSGASSLDVYDGRFLAQVEGTVLVSMNYRVGTFGFLALPGSREAPGNVGLLDQRLALQWVQENIAAFGGDPMSVTLFGESAGAASVGMHILSLPSRSLFHRAVLQSGTPNGPWATVSAGEARRRATLLARLVGCPPGGAGGNDTELISCLRTRPAQDLVDHEWHVLPQESIFRFSFVPVVDGDFLSDTPDALINTGDFQDLQVLVGVVKDEGSYFLVYGVPGFSKDNESLISRAQFLAGVRIGVPQASDLAAEAVVLHYTDWLHPEDPAHLRDAMSAVVGDHNVVCPVAQLAGRLAAQGARVYAYIFEHRASTLTWPLWMGVPHGYEIEFIFGLPLDPSLNYTVEERIFAQRLMQYWTNFARTGDPNDPRDSKSPRWPPYTTAAQQYVSLNLKPLEVRRGLRAQTCAFWNRFLPKLLSATDTLDEAERQWKAEFHRWSSYMVHWKNQFDHYSKQERCSDL</sequence>
<gene>
    <name type="primary">Ache</name>
</gene>
<comment type="function">
    <text>Terminates signal transduction at the neuromuscular junction by rapid hydrolysis of the acetylcholine released into the synaptic cleft.</text>
</comment>
<comment type="catalytic activity">
    <molecule>Isoform T</molecule>
    <reaction evidence="4">
        <text>acetylcholine + H2O = choline + acetate + H(+)</text>
        <dbReference type="Rhea" id="RHEA:17561"/>
        <dbReference type="ChEBI" id="CHEBI:15354"/>
        <dbReference type="ChEBI" id="CHEBI:15355"/>
        <dbReference type="ChEBI" id="CHEBI:15377"/>
        <dbReference type="ChEBI" id="CHEBI:15378"/>
        <dbReference type="ChEBI" id="CHEBI:30089"/>
        <dbReference type="EC" id="3.1.1.7"/>
    </reaction>
    <physiologicalReaction direction="left-to-right" evidence="8">
        <dbReference type="Rhea" id="RHEA:17562"/>
    </physiologicalReaction>
</comment>
<comment type="subunit">
    <text evidence="1 8">Homotetramer; composed of disulfide-linked homodimers. Catalytic forms H (GPI-anchor dimer) and T (asymmetric collagen-tailed), which differ in their C-terminus, account for all types of known ACHE forms (Probable). Interacts with PRIMA1. The interaction with PRIMA1 is required to anchor it to the basal lamina of cells and organize into tetramers (By similarity).</text>
</comment>
<comment type="subcellular location">
    <subcellularLocation>
        <location>Synapse</location>
    </subcellularLocation>
    <subcellularLocation>
        <location>Secreted</location>
    </subcellularLocation>
    <subcellularLocation>
        <location evidence="1">Cell membrane</location>
        <topology evidence="1">Peripheral membrane protein</topology>
    </subcellularLocation>
</comment>
<comment type="subcellular location">
    <molecule>Isoform H</molecule>
    <subcellularLocation>
        <location>Cell membrane</location>
        <topology>Lipid-anchor</topology>
        <topology>GPI-anchor</topology>
        <orientation>Extracellular side</orientation>
    </subcellularLocation>
</comment>
<comment type="alternative products">
    <event type="alternative splicing"/>
    <isoform>
        <id>P37136-1</id>
        <name evidence="5">T</name>
        <sequence type="displayed"/>
    </isoform>
    <isoform>
        <id>P37136-2</id>
        <name evidence="5">H</name>
        <sequence type="described" ref="VSP_001458"/>
    </isoform>
    <isoform>
        <id>P37136-3</id>
        <name>R</name>
        <sequence type="described" ref="VSP_001459"/>
    </isoform>
</comment>
<comment type="tissue specificity">
    <text evidence="4">Has been found in central nervous system and muscle (PubMed:8417155). Found in embryonic liver and spleen but not in adult liver (PubMed:8417155).</text>
</comment>
<comment type="miscellaneous">
    <molecule>Isoform R</molecule>
    <text evidence="7">May be not functional.</text>
</comment>
<comment type="similarity">
    <text evidence="7">Belongs to the type-B carboxylesterase/lipase family.</text>
</comment>
<name>ACES_RAT</name>
<reference key="1">
    <citation type="journal article" date="1993" name="J. Neurochem.">
        <title>Cloning and expression of a rat acetylcholinesterase subunit: generation of multiple molecular forms and complementarity with a Torpedo collagenic subunit.</title>
        <authorList>
            <person name="Legay C."/>
            <person name="Bon S."/>
            <person name="Vernier P."/>
            <person name="Coussen F."/>
            <person name="Massoulie J."/>
        </authorList>
    </citation>
    <scope>NUCLEOTIDE SEQUENCE [MRNA] (ISOFORM T)</scope>
    <scope>SUBUNIT</scope>
</reference>
<reference key="2">
    <citation type="journal article" date="1993" name="FEBS Lett.">
        <title>Expression of a cDNA encoding the glycolipid-anchored form of rat acetylcholinesterase.</title>
        <authorList>
            <person name="Legay C."/>
            <person name="Bon S."/>
            <person name="Massoulie J."/>
        </authorList>
    </citation>
    <scope>NUCLEOTIDE SEQUENCE [MRNA] (ISOFORMS H AND R)</scope>
</reference>
<dbReference type="EC" id="3.1.1.7" evidence="4"/>
<dbReference type="EMBL" id="S50879">
    <property type="protein sequence ID" value="AAB24586.1"/>
    <property type="molecule type" value="mRNA"/>
</dbReference>
<dbReference type="EMBL" id="X70140">
    <property type="protein sequence ID" value="CAA49717.1"/>
    <property type="molecule type" value="mRNA"/>
</dbReference>
<dbReference type="EMBL" id="X70141">
    <property type="protein sequence ID" value="CAA49718.1"/>
    <property type="molecule type" value="mRNA"/>
</dbReference>
<dbReference type="PIR" id="JH0811">
    <property type="entry name" value="JH0811"/>
</dbReference>
<dbReference type="RefSeq" id="NP_742006.1">
    <property type="nucleotide sequence ID" value="NM_172009.1"/>
</dbReference>
<dbReference type="SMR" id="P37136"/>
<dbReference type="CORUM" id="P37136"/>
<dbReference type="FunCoup" id="P37136">
    <property type="interactions" value="311"/>
</dbReference>
<dbReference type="STRING" id="10116.ENSRNOP00000073951"/>
<dbReference type="BindingDB" id="P37136"/>
<dbReference type="ChEMBL" id="CHEMBL3199"/>
<dbReference type="DrugCentral" id="P37136"/>
<dbReference type="ESTHER" id="ratno-ACHE">
    <property type="family name" value="ACHE"/>
</dbReference>
<dbReference type="MEROPS" id="S09.979"/>
<dbReference type="GlyCosmos" id="P37136">
    <property type="glycosylation" value="3 sites, No reported glycans"/>
</dbReference>
<dbReference type="GlyGen" id="P37136">
    <property type="glycosylation" value="4 sites"/>
</dbReference>
<dbReference type="iPTMnet" id="P37136"/>
<dbReference type="PhosphoSitePlus" id="P37136"/>
<dbReference type="PaxDb" id="10116-ENSRNOP00000064185"/>
<dbReference type="GeneID" id="83817"/>
<dbReference type="KEGG" id="rno:83817"/>
<dbReference type="AGR" id="RGD:69313"/>
<dbReference type="CTD" id="43"/>
<dbReference type="RGD" id="69313">
    <property type="gene designation" value="Ache"/>
</dbReference>
<dbReference type="eggNOG" id="KOG4389">
    <property type="taxonomic scope" value="Eukaryota"/>
</dbReference>
<dbReference type="InParanoid" id="P37136"/>
<dbReference type="OrthoDB" id="9000293at2759"/>
<dbReference type="PhylomeDB" id="P37136"/>
<dbReference type="BRENDA" id="3.1.1.7">
    <property type="organism ID" value="5301"/>
</dbReference>
<dbReference type="PRO" id="PR:P37136"/>
<dbReference type="Proteomes" id="UP000002494">
    <property type="component" value="Unplaced"/>
</dbReference>
<dbReference type="GO" id="GO:0030424">
    <property type="term" value="C:axon"/>
    <property type="evidence" value="ECO:0000314"/>
    <property type="project" value="RGD"/>
</dbReference>
<dbReference type="GO" id="GO:0005604">
    <property type="term" value="C:basement membrane"/>
    <property type="evidence" value="ECO:0000266"/>
    <property type="project" value="RGD"/>
</dbReference>
<dbReference type="GO" id="GO:0009986">
    <property type="term" value="C:cell surface"/>
    <property type="evidence" value="ECO:0000314"/>
    <property type="project" value="RGD"/>
</dbReference>
<dbReference type="GO" id="GO:0030425">
    <property type="term" value="C:dendrite"/>
    <property type="evidence" value="ECO:0000314"/>
    <property type="project" value="RGD"/>
</dbReference>
<dbReference type="GO" id="GO:0005788">
    <property type="term" value="C:endoplasmic reticulum lumen"/>
    <property type="evidence" value="ECO:0000314"/>
    <property type="project" value="RGD"/>
</dbReference>
<dbReference type="GO" id="GO:0005576">
    <property type="term" value="C:extracellular region"/>
    <property type="evidence" value="ECO:0000266"/>
    <property type="project" value="RGD"/>
</dbReference>
<dbReference type="GO" id="GO:0005615">
    <property type="term" value="C:extracellular space"/>
    <property type="evidence" value="ECO:0000266"/>
    <property type="project" value="RGD"/>
</dbReference>
<dbReference type="GO" id="GO:0005794">
    <property type="term" value="C:Golgi apparatus"/>
    <property type="evidence" value="ECO:0000266"/>
    <property type="project" value="RGD"/>
</dbReference>
<dbReference type="GO" id="GO:0016020">
    <property type="term" value="C:membrane"/>
    <property type="evidence" value="ECO:0000266"/>
    <property type="project" value="RGD"/>
</dbReference>
<dbReference type="GO" id="GO:0045121">
    <property type="term" value="C:membrane raft"/>
    <property type="evidence" value="ECO:0000314"/>
    <property type="project" value="RGD"/>
</dbReference>
<dbReference type="GO" id="GO:0031594">
    <property type="term" value="C:neuromuscular junction"/>
    <property type="evidence" value="ECO:0000314"/>
    <property type="project" value="SynGO"/>
</dbReference>
<dbReference type="GO" id="GO:0043025">
    <property type="term" value="C:neuronal cell body"/>
    <property type="evidence" value="ECO:0000314"/>
    <property type="project" value="RGD"/>
</dbReference>
<dbReference type="GO" id="GO:0005635">
    <property type="term" value="C:nuclear envelope"/>
    <property type="evidence" value="ECO:0000314"/>
    <property type="project" value="RGD"/>
</dbReference>
<dbReference type="GO" id="GO:0048471">
    <property type="term" value="C:perinuclear region of cytoplasm"/>
    <property type="evidence" value="ECO:0000314"/>
    <property type="project" value="RGD"/>
</dbReference>
<dbReference type="GO" id="GO:0005886">
    <property type="term" value="C:plasma membrane"/>
    <property type="evidence" value="ECO:0000266"/>
    <property type="project" value="RGD"/>
</dbReference>
<dbReference type="GO" id="GO:0045211">
    <property type="term" value="C:postsynaptic membrane"/>
    <property type="evidence" value="ECO:0000314"/>
    <property type="project" value="RGD"/>
</dbReference>
<dbReference type="GO" id="GO:0042734">
    <property type="term" value="C:presynaptic membrane"/>
    <property type="evidence" value="ECO:0000314"/>
    <property type="project" value="RGD"/>
</dbReference>
<dbReference type="GO" id="GO:0098552">
    <property type="term" value="C:side of membrane"/>
    <property type="evidence" value="ECO:0007669"/>
    <property type="project" value="UniProtKB-KW"/>
</dbReference>
<dbReference type="GO" id="GO:0045202">
    <property type="term" value="C:synapse"/>
    <property type="evidence" value="ECO:0000266"/>
    <property type="project" value="RGD"/>
</dbReference>
<dbReference type="GO" id="GO:0043083">
    <property type="term" value="C:synaptic cleft"/>
    <property type="evidence" value="ECO:0000314"/>
    <property type="project" value="SynGO"/>
</dbReference>
<dbReference type="GO" id="GO:0042166">
    <property type="term" value="F:acetylcholine binding"/>
    <property type="evidence" value="ECO:0000314"/>
    <property type="project" value="RGD"/>
</dbReference>
<dbReference type="GO" id="GO:0003990">
    <property type="term" value="F:acetylcholinesterase activity"/>
    <property type="evidence" value="ECO:0000314"/>
    <property type="project" value="RGD"/>
</dbReference>
<dbReference type="GO" id="GO:0004104">
    <property type="term" value="F:cholinesterase activity"/>
    <property type="evidence" value="ECO:0000266"/>
    <property type="project" value="RGD"/>
</dbReference>
<dbReference type="GO" id="GO:0005518">
    <property type="term" value="F:collagen binding"/>
    <property type="evidence" value="ECO:0000266"/>
    <property type="project" value="RGD"/>
</dbReference>
<dbReference type="GO" id="GO:0016787">
    <property type="term" value="F:hydrolase activity"/>
    <property type="evidence" value="ECO:0000266"/>
    <property type="project" value="RGD"/>
</dbReference>
<dbReference type="GO" id="GO:0042802">
    <property type="term" value="F:identical protein binding"/>
    <property type="evidence" value="ECO:0000266"/>
    <property type="project" value="RGD"/>
</dbReference>
<dbReference type="GO" id="GO:0043236">
    <property type="term" value="F:laminin binding"/>
    <property type="evidence" value="ECO:0000266"/>
    <property type="project" value="RGD"/>
</dbReference>
<dbReference type="GO" id="GO:0042803">
    <property type="term" value="F:protein homodimerization activity"/>
    <property type="evidence" value="ECO:0000266"/>
    <property type="project" value="RGD"/>
</dbReference>
<dbReference type="GO" id="GO:0017171">
    <property type="term" value="F:serine hydrolase activity"/>
    <property type="evidence" value="ECO:0000266"/>
    <property type="project" value="RGD"/>
</dbReference>
<dbReference type="GO" id="GO:0006581">
    <property type="term" value="P:acetylcholine catabolic process"/>
    <property type="evidence" value="ECO:0000314"/>
    <property type="project" value="RGD"/>
</dbReference>
<dbReference type="GO" id="GO:0008291">
    <property type="term" value="P:acetylcholine metabolic process"/>
    <property type="evidence" value="ECO:0000315"/>
    <property type="project" value="RGD"/>
</dbReference>
<dbReference type="GO" id="GO:0095500">
    <property type="term" value="P:acetylcholine receptor signaling pathway"/>
    <property type="evidence" value="ECO:0000266"/>
    <property type="project" value="RGD"/>
</dbReference>
<dbReference type="GO" id="GO:0007420">
    <property type="term" value="P:brain development"/>
    <property type="evidence" value="ECO:0000270"/>
    <property type="project" value="RGD"/>
</dbReference>
<dbReference type="GO" id="GO:0007155">
    <property type="term" value="P:cell adhesion"/>
    <property type="evidence" value="ECO:0000266"/>
    <property type="project" value="RGD"/>
</dbReference>
<dbReference type="GO" id="GO:0019695">
    <property type="term" value="P:choline metabolic process"/>
    <property type="evidence" value="ECO:0000314"/>
    <property type="project" value="RGD"/>
</dbReference>
<dbReference type="GO" id="GO:0002076">
    <property type="term" value="P:osteoblast development"/>
    <property type="evidence" value="ECO:0000266"/>
    <property type="project" value="RGD"/>
</dbReference>
<dbReference type="GO" id="GO:0050772">
    <property type="term" value="P:positive regulation of axonogenesis"/>
    <property type="evidence" value="ECO:0000315"/>
    <property type="project" value="RGD"/>
</dbReference>
<dbReference type="GO" id="GO:0120162">
    <property type="term" value="P:positive regulation of cold-induced thermogenesis"/>
    <property type="evidence" value="ECO:0000250"/>
    <property type="project" value="YuBioLab"/>
</dbReference>
<dbReference type="GO" id="GO:0050775">
    <property type="term" value="P:positive regulation of dendrite morphogenesis"/>
    <property type="evidence" value="ECO:0000315"/>
    <property type="project" value="RGD"/>
</dbReference>
<dbReference type="GO" id="GO:0031623">
    <property type="term" value="P:receptor internalization"/>
    <property type="evidence" value="ECO:0000266"/>
    <property type="project" value="RGD"/>
</dbReference>
<dbReference type="GO" id="GO:0001919">
    <property type="term" value="P:regulation of receptor recycling"/>
    <property type="evidence" value="ECO:0000266"/>
    <property type="project" value="RGD"/>
</dbReference>
<dbReference type="GO" id="GO:0046686">
    <property type="term" value="P:response to cadmium ion"/>
    <property type="evidence" value="ECO:0000270"/>
    <property type="project" value="RGD"/>
</dbReference>
<dbReference type="GO" id="GO:0045471">
    <property type="term" value="P:response to ethanol"/>
    <property type="evidence" value="ECO:0000270"/>
    <property type="project" value="RGD"/>
</dbReference>
<dbReference type="GO" id="GO:0017085">
    <property type="term" value="P:response to insecticide"/>
    <property type="evidence" value="ECO:0000270"/>
    <property type="project" value="RGD"/>
</dbReference>
<dbReference type="GO" id="GO:0032868">
    <property type="term" value="P:response to insulin"/>
    <property type="evidence" value="ECO:0000314"/>
    <property type="project" value="RGD"/>
</dbReference>
<dbReference type="GO" id="GO:0035094">
    <property type="term" value="P:response to nicotine"/>
    <property type="evidence" value="ECO:0000270"/>
    <property type="project" value="RGD"/>
</dbReference>
<dbReference type="GO" id="GO:0060041">
    <property type="term" value="P:retina development in camera-type eye"/>
    <property type="evidence" value="ECO:0000266"/>
    <property type="project" value="RGD"/>
</dbReference>
<dbReference type="GO" id="GO:0007416">
    <property type="term" value="P:synapse assembly"/>
    <property type="evidence" value="ECO:0000315"/>
    <property type="project" value="RGD"/>
</dbReference>
<dbReference type="CDD" id="cd00312">
    <property type="entry name" value="Esterase_lipase"/>
    <property type="match status" value="1"/>
</dbReference>
<dbReference type="FunFam" id="3.40.50.1820:FF:000029">
    <property type="entry name" value="Acetylcholinesterase"/>
    <property type="match status" value="1"/>
</dbReference>
<dbReference type="Gene3D" id="3.40.50.1820">
    <property type="entry name" value="alpha/beta hydrolase"/>
    <property type="match status" value="1"/>
</dbReference>
<dbReference type="InterPro" id="IPR029058">
    <property type="entry name" value="AB_hydrolase_fold"/>
</dbReference>
<dbReference type="InterPro" id="IPR050654">
    <property type="entry name" value="AChE-related_enzymes"/>
</dbReference>
<dbReference type="InterPro" id="IPR014788">
    <property type="entry name" value="AChE_tetra"/>
</dbReference>
<dbReference type="InterPro" id="IPR002018">
    <property type="entry name" value="CarbesteraseB"/>
</dbReference>
<dbReference type="InterPro" id="IPR019826">
    <property type="entry name" value="Carboxylesterase_B_AS"/>
</dbReference>
<dbReference type="InterPro" id="IPR019819">
    <property type="entry name" value="Carboxylesterase_B_CS"/>
</dbReference>
<dbReference type="InterPro" id="IPR000997">
    <property type="entry name" value="Cholinesterase"/>
</dbReference>
<dbReference type="PANTHER" id="PTHR43918">
    <property type="entry name" value="ACETYLCHOLINESTERASE"/>
    <property type="match status" value="1"/>
</dbReference>
<dbReference type="PANTHER" id="PTHR43918:SF11">
    <property type="entry name" value="ACETYLCHOLINESTERASE"/>
    <property type="match status" value="1"/>
</dbReference>
<dbReference type="Pfam" id="PF08674">
    <property type="entry name" value="AChE_tetra"/>
    <property type="match status" value="1"/>
</dbReference>
<dbReference type="Pfam" id="PF00135">
    <property type="entry name" value="COesterase"/>
    <property type="match status" value="1"/>
</dbReference>
<dbReference type="PRINTS" id="PR00878">
    <property type="entry name" value="CHOLNESTRASE"/>
</dbReference>
<dbReference type="SUPFAM" id="SSF53474">
    <property type="entry name" value="alpha/beta-Hydrolases"/>
    <property type="match status" value="1"/>
</dbReference>
<dbReference type="PROSITE" id="PS00122">
    <property type="entry name" value="CARBOXYLESTERASE_B_1"/>
    <property type="match status" value="1"/>
</dbReference>
<dbReference type="PROSITE" id="PS00941">
    <property type="entry name" value="CARBOXYLESTERASE_B_2"/>
    <property type="match status" value="1"/>
</dbReference>